<accession>Q3AC58</accession>
<evidence type="ECO:0000255" key="1">
    <source>
        <dbReference type="HAMAP-Rule" id="MF_00104"/>
    </source>
</evidence>
<reference key="1">
    <citation type="journal article" date="2005" name="PLoS Genet.">
        <title>Life in hot carbon monoxide: the complete genome sequence of Carboxydothermus hydrogenoformans Z-2901.</title>
        <authorList>
            <person name="Wu M."/>
            <person name="Ren Q."/>
            <person name="Durkin A.S."/>
            <person name="Daugherty S.C."/>
            <person name="Brinkac L.M."/>
            <person name="Dodson R.J."/>
            <person name="Madupu R."/>
            <person name="Sullivan S.A."/>
            <person name="Kolonay J.F."/>
            <person name="Nelson W.C."/>
            <person name="Tallon L.J."/>
            <person name="Jones K.M."/>
            <person name="Ulrich L.E."/>
            <person name="Gonzalez J.M."/>
            <person name="Zhulin I.B."/>
            <person name="Robb F.T."/>
            <person name="Eisen J.A."/>
        </authorList>
    </citation>
    <scope>NUCLEOTIDE SEQUENCE [LARGE SCALE GENOMIC DNA]</scope>
    <source>
        <strain>ATCC BAA-161 / DSM 6008 / Z-2901</strain>
    </source>
</reference>
<gene>
    <name evidence="1" type="primary">rnc</name>
    <name type="ordered locus">CHY_1444</name>
</gene>
<dbReference type="EC" id="3.1.26.3" evidence="1"/>
<dbReference type="EMBL" id="CP000141">
    <property type="protein sequence ID" value="ABB15325.1"/>
    <property type="molecule type" value="Genomic_DNA"/>
</dbReference>
<dbReference type="RefSeq" id="WP_011344351.1">
    <property type="nucleotide sequence ID" value="NC_007503.1"/>
</dbReference>
<dbReference type="SMR" id="Q3AC58"/>
<dbReference type="FunCoup" id="Q3AC58">
    <property type="interactions" value="348"/>
</dbReference>
<dbReference type="STRING" id="246194.CHY_1444"/>
<dbReference type="KEGG" id="chy:CHY_1444"/>
<dbReference type="eggNOG" id="COG0571">
    <property type="taxonomic scope" value="Bacteria"/>
</dbReference>
<dbReference type="HOGENOM" id="CLU_000907_1_3_9"/>
<dbReference type="InParanoid" id="Q3AC58"/>
<dbReference type="OrthoDB" id="9805026at2"/>
<dbReference type="Proteomes" id="UP000002706">
    <property type="component" value="Chromosome"/>
</dbReference>
<dbReference type="GO" id="GO:0005737">
    <property type="term" value="C:cytoplasm"/>
    <property type="evidence" value="ECO:0007669"/>
    <property type="project" value="UniProtKB-SubCell"/>
</dbReference>
<dbReference type="GO" id="GO:0003725">
    <property type="term" value="F:double-stranded RNA binding"/>
    <property type="evidence" value="ECO:0007669"/>
    <property type="project" value="TreeGrafter"/>
</dbReference>
<dbReference type="GO" id="GO:0046872">
    <property type="term" value="F:metal ion binding"/>
    <property type="evidence" value="ECO:0007669"/>
    <property type="project" value="UniProtKB-KW"/>
</dbReference>
<dbReference type="GO" id="GO:0004525">
    <property type="term" value="F:ribonuclease III activity"/>
    <property type="evidence" value="ECO:0007669"/>
    <property type="project" value="UniProtKB-UniRule"/>
</dbReference>
<dbReference type="GO" id="GO:0019843">
    <property type="term" value="F:rRNA binding"/>
    <property type="evidence" value="ECO:0007669"/>
    <property type="project" value="UniProtKB-KW"/>
</dbReference>
<dbReference type="GO" id="GO:0006397">
    <property type="term" value="P:mRNA processing"/>
    <property type="evidence" value="ECO:0007669"/>
    <property type="project" value="UniProtKB-UniRule"/>
</dbReference>
<dbReference type="GO" id="GO:0010468">
    <property type="term" value="P:regulation of gene expression"/>
    <property type="evidence" value="ECO:0007669"/>
    <property type="project" value="TreeGrafter"/>
</dbReference>
<dbReference type="GO" id="GO:0006364">
    <property type="term" value="P:rRNA processing"/>
    <property type="evidence" value="ECO:0007669"/>
    <property type="project" value="UniProtKB-UniRule"/>
</dbReference>
<dbReference type="GO" id="GO:0008033">
    <property type="term" value="P:tRNA processing"/>
    <property type="evidence" value="ECO:0007669"/>
    <property type="project" value="UniProtKB-KW"/>
</dbReference>
<dbReference type="CDD" id="cd10845">
    <property type="entry name" value="DSRM_RNAse_III_family"/>
    <property type="match status" value="1"/>
</dbReference>
<dbReference type="CDD" id="cd00593">
    <property type="entry name" value="RIBOc"/>
    <property type="match status" value="1"/>
</dbReference>
<dbReference type="FunFam" id="1.10.1520.10:FF:000001">
    <property type="entry name" value="Ribonuclease 3"/>
    <property type="match status" value="1"/>
</dbReference>
<dbReference type="FunFam" id="3.30.160.20:FF:000003">
    <property type="entry name" value="Ribonuclease 3"/>
    <property type="match status" value="1"/>
</dbReference>
<dbReference type="Gene3D" id="3.30.160.20">
    <property type="match status" value="1"/>
</dbReference>
<dbReference type="Gene3D" id="1.10.1520.10">
    <property type="entry name" value="Ribonuclease III domain"/>
    <property type="match status" value="1"/>
</dbReference>
<dbReference type="HAMAP" id="MF_00104">
    <property type="entry name" value="RNase_III"/>
    <property type="match status" value="1"/>
</dbReference>
<dbReference type="InterPro" id="IPR014720">
    <property type="entry name" value="dsRBD_dom"/>
</dbReference>
<dbReference type="InterPro" id="IPR011907">
    <property type="entry name" value="RNase_III"/>
</dbReference>
<dbReference type="InterPro" id="IPR000999">
    <property type="entry name" value="RNase_III_dom"/>
</dbReference>
<dbReference type="InterPro" id="IPR036389">
    <property type="entry name" value="RNase_III_sf"/>
</dbReference>
<dbReference type="NCBIfam" id="TIGR02191">
    <property type="entry name" value="RNaseIII"/>
    <property type="match status" value="1"/>
</dbReference>
<dbReference type="PANTHER" id="PTHR11207:SF0">
    <property type="entry name" value="RIBONUCLEASE 3"/>
    <property type="match status" value="1"/>
</dbReference>
<dbReference type="PANTHER" id="PTHR11207">
    <property type="entry name" value="RIBONUCLEASE III"/>
    <property type="match status" value="1"/>
</dbReference>
<dbReference type="Pfam" id="PF00035">
    <property type="entry name" value="dsrm"/>
    <property type="match status" value="1"/>
</dbReference>
<dbReference type="Pfam" id="PF14622">
    <property type="entry name" value="Ribonucleas_3_3"/>
    <property type="match status" value="1"/>
</dbReference>
<dbReference type="SMART" id="SM00358">
    <property type="entry name" value="DSRM"/>
    <property type="match status" value="1"/>
</dbReference>
<dbReference type="SMART" id="SM00535">
    <property type="entry name" value="RIBOc"/>
    <property type="match status" value="1"/>
</dbReference>
<dbReference type="SUPFAM" id="SSF54768">
    <property type="entry name" value="dsRNA-binding domain-like"/>
    <property type="match status" value="1"/>
</dbReference>
<dbReference type="SUPFAM" id="SSF69065">
    <property type="entry name" value="RNase III domain-like"/>
    <property type="match status" value="1"/>
</dbReference>
<dbReference type="PROSITE" id="PS50137">
    <property type="entry name" value="DS_RBD"/>
    <property type="match status" value="1"/>
</dbReference>
<dbReference type="PROSITE" id="PS00517">
    <property type="entry name" value="RNASE_3_1"/>
    <property type="match status" value="1"/>
</dbReference>
<dbReference type="PROSITE" id="PS50142">
    <property type="entry name" value="RNASE_3_2"/>
    <property type="match status" value="1"/>
</dbReference>
<feature type="chain" id="PRO_0000228512" description="Ribonuclease 3">
    <location>
        <begin position="1"/>
        <end position="235"/>
    </location>
</feature>
<feature type="domain" description="RNase III" evidence="1">
    <location>
        <begin position="6"/>
        <end position="135"/>
    </location>
</feature>
<feature type="domain" description="DRBM" evidence="1">
    <location>
        <begin position="162"/>
        <end position="231"/>
    </location>
</feature>
<feature type="active site" evidence="1">
    <location>
        <position position="52"/>
    </location>
</feature>
<feature type="active site" evidence="1">
    <location>
        <position position="124"/>
    </location>
</feature>
<feature type="binding site" evidence="1">
    <location>
        <position position="48"/>
    </location>
    <ligand>
        <name>Mg(2+)</name>
        <dbReference type="ChEBI" id="CHEBI:18420"/>
    </ligand>
</feature>
<feature type="binding site" evidence="1">
    <location>
        <position position="121"/>
    </location>
    <ligand>
        <name>Mg(2+)</name>
        <dbReference type="ChEBI" id="CHEBI:18420"/>
    </ligand>
</feature>
<feature type="binding site" evidence="1">
    <location>
        <position position="124"/>
    </location>
    <ligand>
        <name>Mg(2+)</name>
        <dbReference type="ChEBI" id="CHEBI:18420"/>
    </ligand>
</feature>
<proteinExistence type="inferred from homology"/>
<organism>
    <name type="scientific">Carboxydothermus hydrogenoformans (strain ATCC BAA-161 / DSM 6008 / Z-2901)</name>
    <dbReference type="NCBI Taxonomy" id="246194"/>
    <lineage>
        <taxon>Bacteria</taxon>
        <taxon>Bacillati</taxon>
        <taxon>Bacillota</taxon>
        <taxon>Clostridia</taxon>
        <taxon>Thermoanaerobacterales</taxon>
        <taxon>Thermoanaerobacteraceae</taxon>
        <taxon>Carboxydothermus</taxon>
    </lineage>
</organism>
<keyword id="KW-0963">Cytoplasm</keyword>
<keyword id="KW-0255">Endonuclease</keyword>
<keyword id="KW-0378">Hydrolase</keyword>
<keyword id="KW-0460">Magnesium</keyword>
<keyword id="KW-0479">Metal-binding</keyword>
<keyword id="KW-0507">mRNA processing</keyword>
<keyword id="KW-0540">Nuclease</keyword>
<keyword id="KW-1185">Reference proteome</keyword>
<keyword id="KW-0694">RNA-binding</keyword>
<keyword id="KW-0698">rRNA processing</keyword>
<keyword id="KW-0699">rRNA-binding</keyword>
<keyword id="KW-0819">tRNA processing</keyword>
<comment type="function">
    <text evidence="1">Digests double-stranded RNA. Involved in the processing of primary rRNA transcript to yield the immediate precursors to the large and small rRNAs (23S and 16S). Processes some mRNAs, and tRNAs when they are encoded in the rRNA operon. Processes pre-crRNA and tracrRNA of type II CRISPR loci if present in the organism.</text>
</comment>
<comment type="catalytic activity">
    <reaction evidence="1">
        <text>Endonucleolytic cleavage to 5'-phosphomonoester.</text>
        <dbReference type="EC" id="3.1.26.3"/>
    </reaction>
</comment>
<comment type="cofactor">
    <cofactor evidence="1">
        <name>Mg(2+)</name>
        <dbReference type="ChEBI" id="CHEBI:18420"/>
    </cofactor>
</comment>
<comment type="subunit">
    <text evidence="1">Homodimer.</text>
</comment>
<comment type="subcellular location">
    <subcellularLocation>
        <location evidence="1">Cytoplasm</location>
    </subcellularLocation>
</comment>
<comment type="similarity">
    <text evidence="1">Belongs to the ribonuclease III family.</text>
</comment>
<sequence length="235" mass="26621">MDKENLISLEKILGFNFNNPSILLSAITHPSYAFEHPEEGIEHNERLEFLGDAVLELFISDYLFRTFPQKSEGDLTKLRSRLVCAESLYELAFKINLDKFLRLGKGEFKAGGNQRMSNLANAVEAVIGAVYFDCGIEAAFSFITRLYGEKLKPENLEQLPKDEKTTLQELLQKEKNNVLRYEILLEEGPPHQKIFTAGVIINDKLIATGRGKSKKEAEQEAAKKALELLKNEKEV</sequence>
<protein>
    <recommendedName>
        <fullName evidence="1">Ribonuclease 3</fullName>
        <ecNumber evidence="1">3.1.26.3</ecNumber>
    </recommendedName>
    <alternativeName>
        <fullName evidence="1">Ribonuclease III</fullName>
        <shortName evidence="1">RNase III</shortName>
    </alternativeName>
</protein>
<name>RNC_CARHZ</name>